<evidence type="ECO:0000255" key="1">
    <source>
        <dbReference type="PROSITE-ProRule" id="PRU00366"/>
    </source>
</evidence>
<evidence type="ECO:0000256" key="2">
    <source>
        <dbReference type="SAM" id="MobiDB-lite"/>
    </source>
</evidence>
<evidence type="ECO:0000269" key="3">
    <source>
    </source>
</evidence>
<evidence type="ECO:0000269" key="4">
    <source>
    </source>
</evidence>
<evidence type="ECO:0000269" key="5">
    <source>
    </source>
</evidence>
<evidence type="ECO:0000269" key="6">
    <source>
    </source>
</evidence>
<evidence type="ECO:0000269" key="7">
    <source>
    </source>
</evidence>
<evidence type="ECO:0000269" key="8">
    <source>
    </source>
</evidence>
<evidence type="ECO:0000269" key="9">
    <source>
    </source>
</evidence>
<evidence type="ECO:0000269" key="10">
    <source>
    </source>
</evidence>
<evidence type="ECO:0000269" key="11">
    <source>
    </source>
</evidence>
<evidence type="ECO:0000269" key="12">
    <source>
    </source>
</evidence>
<evidence type="ECO:0000269" key="13">
    <source>
    </source>
</evidence>
<evidence type="ECO:0000269" key="14">
    <source>
    </source>
</evidence>
<evidence type="ECO:0000269" key="15">
    <source>
    </source>
</evidence>
<evidence type="ECO:0000269" key="16">
    <source>
    </source>
</evidence>
<evidence type="ECO:0000269" key="17">
    <source>
    </source>
</evidence>
<evidence type="ECO:0000269" key="18">
    <source>
    </source>
</evidence>
<evidence type="ECO:0000303" key="19">
    <source>
    </source>
</evidence>
<evidence type="ECO:0000303" key="20">
    <source>
    </source>
</evidence>
<evidence type="ECO:0000303" key="21">
    <source>
    </source>
</evidence>
<evidence type="ECO:0000305" key="22"/>
<evidence type="ECO:0000312" key="23">
    <source>
        <dbReference type="Araport" id="AT4G37750"/>
    </source>
</evidence>
<evidence type="ECO:0000312" key="24">
    <source>
        <dbReference type="EMBL" id="CAB38923.1"/>
    </source>
</evidence>
<name>ANT_ARATH</name>
<reference key="1">
    <citation type="journal article" date="1996" name="Plant Cell">
        <title>The AINTEGUMENTA gene of Arabidopsis required for ovule and female gametophyte development is related to the floral homeotic gene APETALA2.</title>
        <authorList>
            <person name="Klucher K.M."/>
            <person name="Chow H."/>
            <person name="Reiser L."/>
            <person name="Fischer R.L."/>
        </authorList>
    </citation>
    <scope>NUCLEOTIDE SEQUENCE [MRNA]</scope>
    <scope>FUNCTION</scope>
    <scope>TISSUE SPECIFICITY</scope>
    <scope>MUTAGENESIS OF GLY-382</scope>
    <source>
        <strain>cv. Landsberg erecta</strain>
    </source>
</reference>
<reference key="2">
    <citation type="journal article" date="1996" name="Plant Cell">
        <title>AINTEGUMENTA, an APETALA2-like gene of Arabidopsis with pleiotropic roles in ovule development and floral organ growth.</title>
        <authorList>
            <person name="Elliott R.C."/>
            <person name="Betzner A.S."/>
            <person name="Huttner E."/>
            <person name="Oakes M.P."/>
            <person name="Tucker W.Q.J."/>
            <person name="Gerentes D."/>
            <person name="Perez P."/>
            <person name="Smyth D.R."/>
        </authorList>
    </citation>
    <scope>NUCLEOTIDE SEQUENCE [MRNA]</scope>
    <scope>FUNCTION</scope>
    <scope>TISSUE SPECIFICITY</scope>
    <scope>DEVELOPMENTAL STAGE</scope>
    <source>
        <strain>cv. Landsberg erecta</strain>
        <tissue>Flower</tissue>
    </source>
</reference>
<reference key="3">
    <citation type="journal article" date="1997" name="FEBS Lett.">
        <title>Complementation of a yeast delta pkc1 mutant by the Arabidopsis protein ANT.</title>
        <authorList>
            <person name="Vergani P."/>
            <person name="Morandini P."/>
            <person name="Soave C."/>
        </authorList>
    </citation>
    <scope>NUCLEOTIDE SEQUENCE [MRNA]</scope>
    <scope>FUNCTION</scope>
</reference>
<reference key="4">
    <citation type="patent" date="2003-05-06" number="US6559357">
        <title>Methods for altering mass and fertility in plants.</title>
        <authorList>
            <person name="Fischer R.L."/>
            <person name="Mizukami Y."/>
        </authorList>
    </citation>
    <scope>NUCLEOTIDE SEQUENCE [GENOMIC DNA]</scope>
    <source>
        <strain>cv. Wassilewskija</strain>
    </source>
</reference>
<reference key="5">
    <citation type="journal article" date="1999" name="Nature">
        <title>Sequence and analysis of chromosome 4 of the plant Arabidopsis thaliana.</title>
        <authorList>
            <person name="Mayer K.F.X."/>
            <person name="Schueller C."/>
            <person name="Wambutt R."/>
            <person name="Murphy G."/>
            <person name="Volckaert G."/>
            <person name="Pohl T."/>
            <person name="Duesterhoeft A."/>
            <person name="Stiekema W."/>
            <person name="Entian K.-D."/>
            <person name="Terryn N."/>
            <person name="Harris B."/>
            <person name="Ansorge W."/>
            <person name="Brandt P."/>
            <person name="Grivell L.A."/>
            <person name="Rieger M."/>
            <person name="Weichselgartner M."/>
            <person name="de Simone V."/>
            <person name="Obermaier B."/>
            <person name="Mache R."/>
            <person name="Mueller M."/>
            <person name="Kreis M."/>
            <person name="Delseny M."/>
            <person name="Puigdomenech P."/>
            <person name="Watson M."/>
            <person name="Schmidtheini T."/>
            <person name="Reichert B."/>
            <person name="Portetelle D."/>
            <person name="Perez-Alonso M."/>
            <person name="Boutry M."/>
            <person name="Bancroft I."/>
            <person name="Vos P."/>
            <person name="Hoheisel J."/>
            <person name="Zimmermann W."/>
            <person name="Wedler H."/>
            <person name="Ridley P."/>
            <person name="Langham S.-A."/>
            <person name="McCullagh B."/>
            <person name="Bilham L."/>
            <person name="Robben J."/>
            <person name="van der Schueren J."/>
            <person name="Grymonprez B."/>
            <person name="Chuang Y.-J."/>
            <person name="Vandenbussche F."/>
            <person name="Braeken M."/>
            <person name="Weltjens I."/>
            <person name="Voet M."/>
            <person name="Bastiaens I."/>
            <person name="Aert R."/>
            <person name="Defoor E."/>
            <person name="Weitzenegger T."/>
            <person name="Bothe G."/>
            <person name="Ramsperger U."/>
            <person name="Hilbert H."/>
            <person name="Braun M."/>
            <person name="Holzer E."/>
            <person name="Brandt A."/>
            <person name="Peters S."/>
            <person name="van Staveren M."/>
            <person name="Dirkse W."/>
            <person name="Mooijman P."/>
            <person name="Klein Lankhorst R."/>
            <person name="Rose M."/>
            <person name="Hauf J."/>
            <person name="Koetter P."/>
            <person name="Berneiser S."/>
            <person name="Hempel S."/>
            <person name="Feldpausch M."/>
            <person name="Lamberth S."/>
            <person name="Van den Daele H."/>
            <person name="De Keyser A."/>
            <person name="Buysshaert C."/>
            <person name="Gielen J."/>
            <person name="Villarroel R."/>
            <person name="De Clercq R."/>
            <person name="van Montagu M."/>
            <person name="Rogers J."/>
            <person name="Cronin A."/>
            <person name="Quail M.A."/>
            <person name="Bray-Allen S."/>
            <person name="Clark L."/>
            <person name="Doggett J."/>
            <person name="Hall S."/>
            <person name="Kay M."/>
            <person name="Lennard N."/>
            <person name="McLay K."/>
            <person name="Mayes R."/>
            <person name="Pettett A."/>
            <person name="Rajandream M.A."/>
            <person name="Lyne M."/>
            <person name="Benes V."/>
            <person name="Rechmann S."/>
            <person name="Borkova D."/>
            <person name="Bloecker H."/>
            <person name="Scharfe M."/>
            <person name="Grimm M."/>
            <person name="Loehnert T.-H."/>
            <person name="Dose S."/>
            <person name="de Haan M."/>
            <person name="Maarse A.C."/>
            <person name="Schaefer M."/>
            <person name="Mueller-Auer S."/>
            <person name="Gabel C."/>
            <person name="Fuchs M."/>
            <person name="Fartmann B."/>
            <person name="Granderath K."/>
            <person name="Dauner D."/>
            <person name="Herzl A."/>
            <person name="Neumann S."/>
            <person name="Argiriou A."/>
            <person name="Vitale D."/>
            <person name="Liguori R."/>
            <person name="Piravandi E."/>
            <person name="Massenet O."/>
            <person name="Quigley F."/>
            <person name="Clabauld G."/>
            <person name="Muendlein A."/>
            <person name="Felber R."/>
            <person name="Schnabl S."/>
            <person name="Hiller R."/>
            <person name="Schmidt W."/>
            <person name="Lecharny A."/>
            <person name="Aubourg S."/>
            <person name="Chefdor F."/>
            <person name="Cooke R."/>
            <person name="Berger C."/>
            <person name="Monfort A."/>
            <person name="Casacuberta E."/>
            <person name="Gibbons T."/>
            <person name="Weber N."/>
            <person name="Vandenbol M."/>
            <person name="Bargues M."/>
            <person name="Terol J."/>
            <person name="Torres A."/>
            <person name="Perez-Perez A."/>
            <person name="Purnelle B."/>
            <person name="Bent E."/>
            <person name="Johnson S."/>
            <person name="Tacon D."/>
            <person name="Jesse T."/>
            <person name="Heijnen L."/>
            <person name="Schwarz S."/>
            <person name="Scholler P."/>
            <person name="Heber S."/>
            <person name="Francs P."/>
            <person name="Bielke C."/>
            <person name="Frishman D."/>
            <person name="Haase D."/>
            <person name="Lemcke K."/>
            <person name="Mewes H.-W."/>
            <person name="Stocker S."/>
            <person name="Zaccaria P."/>
            <person name="Bevan M."/>
            <person name="Wilson R.K."/>
            <person name="de la Bastide M."/>
            <person name="Habermann K."/>
            <person name="Parnell L."/>
            <person name="Dedhia N."/>
            <person name="Gnoj L."/>
            <person name="Schutz K."/>
            <person name="Huang E."/>
            <person name="Spiegel L."/>
            <person name="Sekhon M."/>
            <person name="Murray J."/>
            <person name="Sheet P."/>
            <person name="Cordes M."/>
            <person name="Abu-Threideh J."/>
            <person name="Stoneking T."/>
            <person name="Kalicki J."/>
            <person name="Graves T."/>
            <person name="Harmon G."/>
            <person name="Edwards J."/>
            <person name="Latreille P."/>
            <person name="Courtney L."/>
            <person name="Cloud J."/>
            <person name="Abbott A."/>
            <person name="Scott K."/>
            <person name="Johnson D."/>
            <person name="Minx P."/>
            <person name="Bentley D."/>
            <person name="Fulton B."/>
            <person name="Miller N."/>
            <person name="Greco T."/>
            <person name="Kemp K."/>
            <person name="Kramer J."/>
            <person name="Fulton L."/>
            <person name="Mardis E."/>
            <person name="Dante M."/>
            <person name="Pepin K."/>
            <person name="Hillier L.W."/>
            <person name="Nelson J."/>
            <person name="Spieth J."/>
            <person name="Ryan E."/>
            <person name="Andrews S."/>
            <person name="Geisel C."/>
            <person name="Layman D."/>
            <person name="Du H."/>
            <person name="Ali J."/>
            <person name="Berghoff A."/>
            <person name="Jones K."/>
            <person name="Drone K."/>
            <person name="Cotton M."/>
            <person name="Joshu C."/>
            <person name="Antonoiu B."/>
            <person name="Zidanic M."/>
            <person name="Strong C."/>
            <person name="Sun H."/>
            <person name="Lamar B."/>
            <person name="Yordan C."/>
            <person name="Ma P."/>
            <person name="Zhong J."/>
            <person name="Preston R."/>
            <person name="Vil D."/>
            <person name="Shekher M."/>
            <person name="Matero A."/>
            <person name="Shah R."/>
            <person name="Swaby I.K."/>
            <person name="O'Shaughnessy A."/>
            <person name="Rodriguez M."/>
            <person name="Hoffman J."/>
            <person name="Till S."/>
            <person name="Granat S."/>
            <person name="Shohdy N."/>
            <person name="Hasegawa A."/>
            <person name="Hameed A."/>
            <person name="Lodhi M."/>
            <person name="Johnson A."/>
            <person name="Chen E."/>
            <person name="Marra M.A."/>
            <person name="Martienssen R."/>
            <person name="McCombie W.R."/>
        </authorList>
    </citation>
    <scope>NUCLEOTIDE SEQUENCE [LARGE SCALE GENOMIC DNA]</scope>
    <source>
        <strain>cv. Columbia</strain>
    </source>
</reference>
<reference key="6">
    <citation type="journal article" date="2017" name="Plant J.">
        <title>Araport11: a complete reannotation of the Arabidopsis thaliana reference genome.</title>
        <authorList>
            <person name="Cheng C.Y."/>
            <person name="Krishnakumar V."/>
            <person name="Chan A.P."/>
            <person name="Thibaud-Nissen F."/>
            <person name="Schobel S."/>
            <person name="Town C.D."/>
        </authorList>
    </citation>
    <scope>GENOME REANNOTATION</scope>
    <source>
        <strain>cv. Columbia</strain>
    </source>
</reference>
<reference key="7">
    <citation type="journal article" date="2003" name="Science">
        <title>Empirical analysis of transcriptional activity in the Arabidopsis genome.</title>
        <authorList>
            <person name="Yamada K."/>
            <person name="Lim J."/>
            <person name="Dale J.M."/>
            <person name="Chen H."/>
            <person name="Shinn P."/>
            <person name="Palm C.J."/>
            <person name="Southwick A.M."/>
            <person name="Wu H.C."/>
            <person name="Kim C.J."/>
            <person name="Nguyen M."/>
            <person name="Pham P.K."/>
            <person name="Cheuk R.F."/>
            <person name="Karlin-Newmann G."/>
            <person name="Liu S.X."/>
            <person name="Lam B."/>
            <person name="Sakano H."/>
            <person name="Wu T."/>
            <person name="Yu G."/>
            <person name="Miranda M."/>
            <person name="Quach H.L."/>
            <person name="Tripp M."/>
            <person name="Chang C.H."/>
            <person name="Lee J.M."/>
            <person name="Toriumi M.J."/>
            <person name="Chan M.M."/>
            <person name="Tang C.C."/>
            <person name="Onodera C.S."/>
            <person name="Deng J.M."/>
            <person name="Akiyama K."/>
            <person name="Ansari Y."/>
            <person name="Arakawa T."/>
            <person name="Banh J."/>
            <person name="Banno F."/>
            <person name="Bowser L."/>
            <person name="Brooks S.Y."/>
            <person name="Carninci P."/>
            <person name="Chao Q."/>
            <person name="Choy N."/>
            <person name="Enju A."/>
            <person name="Goldsmith A.D."/>
            <person name="Gurjal M."/>
            <person name="Hansen N.F."/>
            <person name="Hayashizaki Y."/>
            <person name="Johnson-Hopson C."/>
            <person name="Hsuan V.W."/>
            <person name="Iida K."/>
            <person name="Karnes M."/>
            <person name="Khan S."/>
            <person name="Koesema E."/>
            <person name="Ishida J."/>
            <person name="Jiang P.X."/>
            <person name="Jones T."/>
            <person name="Kawai J."/>
            <person name="Kamiya A."/>
            <person name="Meyers C."/>
            <person name="Nakajima M."/>
            <person name="Narusaka M."/>
            <person name="Seki M."/>
            <person name="Sakurai T."/>
            <person name="Satou M."/>
            <person name="Tamse R."/>
            <person name="Vaysberg M."/>
            <person name="Wallender E.K."/>
            <person name="Wong C."/>
            <person name="Yamamura Y."/>
            <person name="Yuan S."/>
            <person name="Shinozaki K."/>
            <person name="Davis R.W."/>
            <person name="Theologis A."/>
            <person name="Ecker J.R."/>
        </authorList>
    </citation>
    <scope>NUCLEOTIDE SEQUENCE [LARGE SCALE MRNA]</scope>
    <source>
        <strain>cv. Columbia</strain>
    </source>
</reference>
<reference key="8">
    <citation type="journal article" date="1993" name="Plant Cell">
        <title>The ovule and the embryo sac.</title>
        <authorList>
            <person name="Reiser L."/>
            <person name="Fischer R.L."/>
        </authorList>
    </citation>
    <scope>FUNCTION</scope>
    <scope>REVIEW</scope>
</reference>
<reference key="9">
    <citation type="journal article" date="1997" name="Development">
        <title>Dissection of sexual organ ontogenesis: a genetic analysis of ovule development in Arabidopsis thaliana.</title>
        <authorList>
            <person name="Schneitz K."/>
            <person name="Huelskamp M."/>
            <person name="Kopczak S.D."/>
            <person name="Pruitt R.E."/>
        </authorList>
    </citation>
    <scope>FUNCTION</scope>
</reference>
<reference key="10">
    <citation type="journal article" date="1997" name="Genetics">
        <title>Interactions among genes regulating ovule development in Arabidopsis thaliana.</title>
        <authorList>
            <person name="Baker S.C."/>
            <person name="Robinson-Beers K."/>
            <person name="Villanueva J.M."/>
            <person name="Gaiser J.C."/>
            <person name="Gasser C.S."/>
        </authorList>
    </citation>
    <scope>FUNCTION</scope>
</reference>
<reference key="11">
    <citation type="journal article" date="1998" name="Development">
        <title>The development of apical embryonic pattern in Arabidopsis.</title>
        <authorList>
            <person name="Long J.A."/>
            <person name="Barton M.K."/>
        </authorList>
    </citation>
    <scope>DEVELOPMENTAL STAGE</scope>
</reference>
<reference key="12">
    <citation type="journal article" date="1999" name="Dev. Genet.">
        <title>Ectopic expression of AINTEGUMENTA in Arabidopsis plants results in increased growth of floral organs.</title>
        <authorList>
            <person name="Krizek B.A."/>
        </authorList>
    </citation>
    <scope>FUNCTION</scope>
    <scope>MUTAGENESIS OF ALA-422</scope>
</reference>
<reference key="13">
    <citation type="journal article" date="2000" name="Dev. Biol.">
        <title>Initiation of axillary and floral meristems in Arabidopsis.</title>
        <authorList>
            <person name="Long J."/>
            <person name="Barton M.K."/>
        </authorList>
    </citation>
    <scope>DEVELOPMENTAL STAGE</scope>
</reference>
<reference key="14">
    <citation type="journal article" date="2000" name="Nucleic Acids Res.">
        <title>DNA binding properties of the Arabidopsis floral development protein AINTEGUMENTA.</title>
        <authorList>
            <person name="Nole-Wilson S."/>
            <person name="Krizek B.A."/>
        </authorList>
    </citation>
    <scope>DNA-BINDING</scope>
</reference>
<reference key="15">
    <citation type="journal article" date="2000" name="Plant Cell">
        <title>AINTEGUMENTA promotes petal identity and acts as a negative regulator of AGAMOUS.</title>
        <authorList>
            <person name="Krizek B.A."/>
            <person name="Prost V."/>
            <person name="Macias A."/>
        </authorList>
    </citation>
    <scope>FUNCTION</scope>
</reference>
<reference key="16">
    <citation type="journal article" date="2000" name="Plant Cell">
        <title>Regulation of gynoecium marginal tissue formation by LEUNIG and AINTEGUMENTA.</title>
        <authorList>
            <person name="Liu Z."/>
            <person name="Franks R.G."/>
            <person name="Klink V.P."/>
        </authorList>
    </citation>
    <scope>FUNCTION</scope>
</reference>
<reference key="17">
    <citation type="journal article" date="2000" name="Proc. Natl. Acad. Sci. U.S.A.">
        <title>Plant organ size control: AINTEGUMENTA regulates growth and cell numbers during organogenesis.</title>
        <authorList>
            <person name="Mizukami Y."/>
            <person name="Fischer R.L."/>
        </authorList>
    </citation>
    <scope>FUNCTION</scope>
</reference>
<reference key="18">
    <citation type="journal article" date="2002" name="Development">
        <title>NOZZLE links proximal-distal and adaxial-abaxial pattern formation during ovule development in Arabidopsis thaliana.</title>
        <authorList>
            <person name="Balasubramanian S."/>
            <person name="Schneitz K."/>
        </authorList>
    </citation>
    <scope>FUNCTION</scope>
</reference>
<reference key="19">
    <citation type="journal article" date="2003" name="Nucleic Acids Res.">
        <title>AINTEGUMENTA utilizes a mode of DNA recognition distinct from that used by proteins containing a single AP2 domain.</title>
        <authorList>
            <person name="Krizek B.A."/>
        </authorList>
    </citation>
    <scope>FUNCTION</scope>
    <scope>MUTAGENESIS OF ARG-285; VAL-287; THR-288; HIS-290; TRP-301; ASN-303; GLY-314; VAL-317; TYR-318; LEU-319; TYR-322; ASP-333; LEU-337; TYR-353; GLU-358; HIS-371; PHE-379; SER-380; GLY-382; SER-384; TYR-386; ARG-387; VAL-389; HIS-392; HIS-393; TYR-412; LEU-413; ALA-422; ALA-423; ASP-427; ILE-431; ILE-452; 281-THR--ILE-357; 383-ALA--ARG-451 AND 452-ILE--SER-555</scope>
</reference>
<reference key="20">
    <citation type="journal article" date="2005" name="Plant Mol. Biol.">
        <title>AINTEGUMENTA-like (AIL) genes are expressed in young tissues and may specify meristematic or division-competent states.</title>
        <authorList>
            <person name="Nole-Wilson S."/>
            <person name="Tranby T.L."/>
            <person name="Krizek B.A."/>
        </authorList>
    </citation>
    <scope>TISSUE SPECIFICITY</scope>
</reference>
<reference key="21">
    <citation type="journal article" date="2006" name="Plant Physiol.">
        <title>Genome-wide analysis of the ERF gene family in Arabidopsis and rice.</title>
        <authorList>
            <person name="Nakano T."/>
            <person name="Suzuki K."/>
            <person name="Fujimura T."/>
            <person name="Shinshi H."/>
        </authorList>
    </citation>
    <scope>GENE FAMILY</scope>
    <scope>NOMENCLATURE</scope>
</reference>
<reference key="22">
    <citation type="journal article" date="2015" name="Development">
        <title>AIL and HDG proteins act antagonistically to control cell proliferation.</title>
        <authorList>
            <person name="Horstman A."/>
            <person name="Fukuoka H."/>
            <person name="Muino J.M."/>
            <person name="Nitsch L."/>
            <person name="Guo C."/>
            <person name="Passarinho P."/>
            <person name="Sanchez-Perez G."/>
            <person name="Immink R."/>
            <person name="Angenent G."/>
            <person name="Boutilier K."/>
        </authorList>
    </citation>
    <scope>INTERACTION WITH ANL2; HDG2; HDG10; GL2; HDG3; HDG8; ATML1 AND PDF2</scope>
    <source>
        <strain>cv. Columbia</strain>
    </source>
</reference>
<sequence>MKSFCDNDDNNHSNTTNLLGFSLSSNMMKMGGRGGREAIYSSSTSSAATSSSSVPPQLVVGDNTSNFGVCYGSNPNGGIYSHMSVMPLRSDGSLCLMEALNRSSHSNHHQDSSPKVEDFFGTHHNNTSHKEAMDLSLDSLFYNTTHEPNTTTNFQEFFSFPQTRNHEEETRNYGNDPSLTHGGSFNVGVYGEFQQSLSLSMSPGSQSSCITGSHHHQQNQNQNHQSQNHQQISEALVETSVGFETTTMAAAKKKRGQEDVVVVGQKQIVHRKSIDTFGQRTSQYRGVTRHRWTGRYEAHLWDNSFKKEGHSRKGRQVYLGGYDMEEKAARAYDLAALKYWGPSTHTNFSAENYQKEIEDMKNMTRQEYVAHLRRKSSGFSRGASIYRGVTRHHQHGRWQARIGRVAGNKDLYLGTFGTQEEAAEAYDVAAIKFRGTNAVTNFDITRYDVDRIMSSNTLLSGELARRNNNSIVVRNTEDQTALNAVVEGGSNKEVSTPERLLSFPAIFALPQVNQKMFGSNMGGNMSPWTSNPNAELKTVALTLPQMPVFAAWADS</sequence>
<feature type="chain" id="PRO_0000112524" description="AP2-like ethylene-responsive transcription factor ANT">
    <location>
        <begin position="1"/>
        <end position="555"/>
    </location>
</feature>
<feature type="DNA-binding region" description="AP2/ERF 1" evidence="1">
    <location>
        <begin position="283"/>
        <end position="349"/>
    </location>
</feature>
<feature type="DNA-binding region" description="AP2/ERF 2" evidence="1">
    <location>
        <begin position="385"/>
        <end position="443"/>
    </location>
</feature>
<feature type="region of interest" description="Disordered" evidence="2">
    <location>
        <begin position="34"/>
        <end position="56"/>
    </location>
</feature>
<feature type="region of interest" description="Disordered" evidence="2">
    <location>
        <begin position="199"/>
        <end position="231"/>
    </location>
</feature>
<feature type="compositionally biased region" description="Low complexity" evidence="2">
    <location>
        <begin position="41"/>
        <end position="53"/>
    </location>
</feature>
<feature type="compositionally biased region" description="Low complexity" evidence="2">
    <location>
        <begin position="199"/>
        <end position="208"/>
    </location>
</feature>
<feature type="compositionally biased region" description="Low complexity" evidence="2">
    <location>
        <begin position="218"/>
        <end position="231"/>
    </location>
</feature>
<feature type="mutagenesis site" description="Loss of activation of transcription." evidence="10">
    <location>
        <begin position="281"/>
        <end position="357"/>
    </location>
</feature>
<feature type="mutagenesis site" description="Reduced activation of transcription." evidence="10">
    <original>R</original>
    <variation>G</variation>
    <location>
        <position position="285"/>
    </location>
</feature>
<feature type="mutagenesis site" description="Loss of activation of transcription; when associated with D-303." evidence="10">
    <original>V</original>
    <variation>A</variation>
    <location>
        <position position="287"/>
    </location>
</feature>
<feature type="mutagenesis site" description="Loss of activation of transcription." evidence="10">
    <original>V</original>
    <variation>D</variation>
    <location>
        <position position="287"/>
    </location>
</feature>
<feature type="mutagenesis site" description="Reduced activation of transcription." evidence="10">
    <original>T</original>
    <variation>A</variation>
    <location>
        <position position="288"/>
    </location>
</feature>
<feature type="mutagenesis site" description="Reduced activation of transcription." evidence="10">
    <original>H</original>
    <variation>A</variation>
    <location>
        <position position="290"/>
    </location>
</feature>
<feature type="mutagenesis site" description="Reduced DNA-binding and loss of activation of transcription." evidence="10">
    <original>W</original>
    <variation>R</variation>
    <location>
        <position position="301"/>
    </location>
</feature>
<feature type="mutagenesis site" description="Loss of activation of transcription; when associated with A-287." evidence="10">
    <original>N</original>
    <variation>D</variation>
    <location>
        <position position="303"/>
    </location>
</feature>
<feature type="mutagenesis site" description="Loss of activation of transcription; when associated with C-353." evidence="10">
    <original>G</original>
    <variation>R</variation>
    <location>
        <position position="314"/>
    </location>
</feature>
<feature type="mutagenesis site" description="No effect on DNA-binding but reduced activation of transcription." evidence="10">
    <original>V</original>
    <variation>D</variation>
    <location>
        <position position="317"/>
    </location>
</feature>
<feature type="mutagenesis site" description="Reduced DNA-binding and loss of activation of transcription." evidence="10">
    <original>Y</original>
    <variation>C</variation>
    <location>
        <position position="318"/>
    </location>
</feature>
<feature type="mutagenesis site" description="Loss of activation of transcription." evidence="10">
    <original>L</original>
    <variation>P</variation>
    <location>
        <position position="319"/>
    </location>
</feature>
<feature type="mutagenesis site" description="Reduced DNA-binding and loss of activation of transcription." evidence="10">
    <original>L</original>
    <variation>Q</variation>
    <location>
        <position position="319"/>
    </location>
</feature>
<feature type="mutagenesis site" description="Loss of activation of transcription; when associated with D-386." evidence="10">
    <original>Y</original>
    <variation>F</variation>
    <location>
        <position position="322"/>
    </location>
</feature>
<feature type="mutagenesis site" description="Loss of activation of transcription; when associated with T-452." evidence="10">
    <original>D</original>
    <variation>E</variation>
    <location>
        <position position="333"/>
    </location>
</feature>
<feature type="mutagenesis site" description="Reduced DNA-binding and loss of activation of transcription." evidence="10">
    <original>D</original>
    <variation>G</variation>
    <location>
        <position position="333"/>
    </location>
</feature>
<feature type="mutagenesis site" description="Reduced DNA-binding and loss of activation of transcription." evidence="10">
    <original>L</original>
    <variation>P</variation>
    <location>
        <position position="337"/>
    </location>
</feature>
<feature type="mutagenesis site" description="Loss of activation of transcription; when associated with R-314." evidence="10">
    <original>Y</original>
    <variation>C</variation>
    <location>
        <position position="353"/>
    </location>
</feature>
<feature type="mutagenesis site" description="Loss of activation of transcription." evidence="10">
    <original>E</original>
    <variation>G</variation>
    <location>
        <position position="358"/>
    </location>
</feature>
<feature type="mutagenesis site" description="Loss of activation of transcription; when associated with A-389." evidence="10">
    <original>H</original>
    <variation>P</variation>
    <location>
        <position position="371"/>
    </location>
</feature>
<feature type="mutagenesis site" description="Loss of activation of transcription." evidence="10">
    <original>F</original>
    <variation>S</variation>
    <location>
        <position position="379"/>
    </location>
</feature>
<feature type="mutagenesis site" description="Reduced DNA-binding and reduced activation of transcription." evidence="10">
    <original>S</original>
    <variation>P</variation>
    <location>
        <position position="380"/>
    </location>
</feature>
<feature type="mutagenesis site" description="In ant-2; female-sterile, loss of ovule integuments initiation, impaired female gametophyte development, abnormal floral organs, and loss of activation of transcription." evidence="10 13">
    <original>G</original>
    <variation>D</variation>
    <location>
        <position position="382"/>
    </location>
</feature>
<feature type="mutagenesis site" description="Loss of activation of transcription." evidence="10">
    <location>
        <begin position="383"/>
        <end position="451"/>
    </location>
</feature>
<feature type="mutagenesis site" description="Loss of activation of transcription." evidence="10">
    <original>S</original>
    <variation>P</variation>
    <location>
        <position position="384"/>
    </location>
</feature>
<feature type="mutagenesis site" description="Loss of activation of transcription; when associated with F-322." evidence="10">
    <original>Y</original>
    <variation>D</variation>
    <location>
        <position position="386"/>
    </location>
</feature>
<feature type="mutagenesis site" description="Reduced DNA-binding and loss of activation of transcription." evidence="10">
    <original>R</original>
    <variation>G</variation>
    <location>
        <position position="387"/>
    </location>
</feature>
<feature type="mutagenesis site" description="Loss of activation of transcription; when associated with P-371." evidence="10">
    <original>V</original>
    <variation>A</variation>
    <location>
        <position position="389"/>
    </location>
</feature>
<feature type="mutagenesis site" description="Reduced activation of transcription." evidence="10">
    <original>V</original>
    <variation>D</variation>
    <location>
        <position position="389"/>
    </location>
</feature>
<feature type="mutagenesis site" description="Reduced activation of transcription." evidence="10">
    <original>H</original>
    <variation>A</variation>
    <location>
        <position position="392"/>
    </location>
</feature>
<feature type="mutagenesis site" description="Reduced activation of transcription." evidence="10">
    <original>H</original>
    <variation>A</variation>
    <location>
        <position position="393"/>
    </location>
</feature>
<feature type="mutagenesis site" description="Reduced activation of transcription." evidence="10">
    <original>Y</original>
    <variation>C</variation>
    <location>
        <position position="412"/>
    </location>
</feature>
<feature type="mutagenesis site" description="Reduced activation of transcription." evidence="10">
    <original>L</original>
    <variation>Q</variation>
    <location>
        <position position="413"/>
    </location>
</feature>
<feature type="mutagenesis site" description="In ant-8; abnormal floral organs and ovule development." evidence="3 10">
    <original>A</original>
    <variation>T</variation>
    <location>
        <position position="422"/>
    </location>
</feature>
<feature type="mutagenesis site" description="Reduced DNA-binding and loss of activation of transcription." evidence="10">
    <original>A</original>
    <variation>T</variation>
    <location>
        <position position="423"/>
    </location>
</feature>
<feature type="mutagenesis site" description="Reduced DNA-binding and loss of activation of transcription." evidence="10">
    <original>D</original>
    <variation>G</variation>
    <location>
        <position position="427"/>
    </location>
</feature>
<feature type="mutagenesis site" description="Reduced DNA-binding and reduced activation of transcription." evidence="10">
    <original>I</original>
    <variation>S</variation>
    <location>
        <position position="431"/>
    </location>
</feature>
<feature type="mutagenesis site" description="No effect on activation of transcription." evidence="10">
    <location>
        <begin position="452"/>
        <end position="555"/>
    </location>
</feature>
<feature type="mutagenesis site" description="Loss of activation of transcription; when associated with E-333." evidence="10">
    <original>I</original>
    <variation>T</variation>
    <location>
        <position position="452"/>
    </location>
</feature>
<feature type="sequence conflict" description="In Ref. 3; AAA86281." evidence="22" ref="3">
    <original>S</original>
    <variation>C</variation>
    <location>
        <position position="45"/>
    </location>
</feature>
<gene>
    <name evidence="20 21" type="primary">ANT</name>
    <name type="synonym">CKC1</name>
    <name type="synonym">DRG</name>
    <name evidence="19" type="synonym">OVM</name>
    <name evidence="23" type="ordered locus">At4g37750</name>
    <name evidence="24" type="ORF">T28I19.30</name>
</gene>
<keyword id="KW-0010">Activator</keyword>
<keyword id="KW-0217">Developmental protein</keyword>
<keyword id="KW-0221">Differentiation</keyword>
<keyword id="KW-0238">DNA-binding</keyword>
<keyword id="KW-0287">Flowering</keyword>
<keyword id="KW-0539">Nucleus</keyword>
<keyword id="KW-1185">Reference proteome</keyword>
<keyword id="KW-0677">Repeat</keyword>
<keyword id="KW-0804">Transcription</keyword>
<keyword id="KW-0805">Transcription regulation</keyword>
<protein>
    <recommendedName>
        <fullName evidence="20 21">AP2-like ethylene-responsive transcription factor ANT</fullName>
    </recommendedName>
    <alternativeName>
        <fullName>Complementing a protein kinase C mutant protein 1</fullName>
    </alternativeName>
    <alternativeName>
        <fullName evidence="20 21">Protein AINTEGUMENTA</fullName>
    </alternativeName>
    <alternativeName>
        <fullName>Protein DRAGON</fullName>
    </alternativeName>
    <alternativeName>
        <fullName evidence="19">Protein OVULE MUTANT</fullName>
    </alternativeName>
</protein>
<comment type="function">
    <text evidence="3 4 6 7 8 9 10 13 14 15 16 17">Transcription activator that recognizes and binds to the DNA consensus sequence 5'-CAC[AG]N[AT]TNCCNANG-3'. Required for the initiation and growth of ovules integumenta, and for the development of female gametophyte. Plays a critical role in the development of gynoecium marginal tissues (e.g. stigma, style and septa), and in the fusion of carpels and of medial ridges leading to ovule primordia. Also involved in organs initiation and development, including floral organs. Maintains the meristematic competence of cells and consequently sustains expression of cell cycle regulators during organogenesis, thus controlling the final size of each organ by controlling their cell number. Regulates INO autoinduction and expression pattern. As ANT promotes petal cell identity and mediates down-regulation of AG in flower whorl 2, it functions as a class A homeotic gene.</text>
</comment>
<comment type="subunit">
    <text evidence="12">Interacts with ANL2, HDG2 and HDG10, and possibly with GL2, HDG3, HDG8, ATML1 and PDF2.</text>
</comment>
<comment type="subcellular location">
    <subcellularLocation>
        <location evidence="22">Nucleus</location>
    </subcellularLocation>
</comment>
<comment type="tissue specificity">
    <text evidence="11 13 14">Mostly expressed in developing flowers. Also present in mature flowers, siliques and seedlings, but not in mature roots, leaves and stems. Expressed in ovules and in vegetative and floral primordia.</text>
</comment>
<comment type="developmental stage">
    <text evidence="5 14 18">Expressed in floral primordia, in STM-negative region, then in sepal primordia. As sepal develops, progressively confined to a basal core before disappearing. Present in stamen primordia, then confined to a central region as they become stalked and develop locules. Later reduced to procambial cells as stamen mature. From petal primordia, expressed on the lateral edges of developing petals and finally confined to petal epidermis before disappearing. Present in carpel primordia, then in inner side of carpels especially in the placenta. Strong levels in ovules primordia and young ovules, then localized in integuments initiation zone before being confined to inner integument cells that will differentiate into the endothelium. Expressed in the distal half of the funiculus throughout ovule development and later extends into the chalaza. After fertilization, expression shift to the embryo. First on the apical part at the globular stage, then in cotyledons primordia, and later in cotyledons during the torpedo stage. As cotyledons grow out, expression becomes limited to a plane separating adaxial and abaxial parts. Excluded from the embryonic central region (ECR). In seedlings, found in leaf primordia then in central and lateral actively developing regions of extending leaves.</text>
</comment>
<comment type="similarity">
    <text evidence="22">Belongs to the AP2/ERF transcription factor family. AP2 subfamily.</text>
</comment>
<dbReference type="EMBL" id="U40256">
    <property type="protein sequence ID" value="AAA91040.1"/>
    <property type="molecule type" value="mRNA"/>
</dbReference>
<dbReference type="EMBL" id="U41339">
    <property type="protein sequence ID" value="AAB17364.1"/>
    <property type="molecule type" value="mRNA"/>
</dbReference>
<dbReference type="EMBL" id="U44028">
    <property type="protein sequence ID" value="AAA86281.1"/>
    <property type="molecule type" value="mRNA"/>
</dbReference>
<dbReference type="EMBL" id="AR316367">
    <property type="status" value="NOT_ANNOTATED_CDS"/>
    <property type="molecule type" value="Genomic_DNA"/>
</dbReference>
<dbReference type="EMBL" id="AL035709">
    <property type="protein sequence ID" value="CAB38923.1"/>
    <property type="molecule type" value="Genomic_DNA"/>
</dbReference>
<dbReference type="EMBL" id="AL161592">
    <property type="protein sequence ID" value="CAB80440.1"/>
    <property type="molecule type" value="Genomic_DNA"/>
</dbReference>
<dbReference type="EMBL" id="CP002687">
    <property type="protein sequence ID" value="AEE86834.1"/>
    <property type="molecule type" value="Genomic_DNA"/>
</dbReference>
<dbReference type="EMBL" id="AY080706">
    <property type="protein sequence ID" value="AAL85024.1"/>
    <property type="molecule type" value="mRNA"/>
</dbReference>
<dbReference type="EMBL" id="AY117207">
    <property type="protein sequence ID" value="AAM51282.1"/>
    <property type="molecule type" value="mRNA"/>
</dbReference>
<dbReference type="PIR" id="S71365">
    <property type="entry name" value="S71365"/>
</dbReference>
<dbReference type="RefSeq" id="NP_195489.1">
    <property type="nucleotide sequence ID" value="NM_119937.3"/>
</dbReference>
<dbReference type="SMR" id="Q38914"/>
<dbReference type="FunCoup" id="Q38914">
    <property type="interactions" value="259"/>
</dbReference>
<dbReference type="IntAct" id="Q38914">
    <property type="interactions" value="4"/>
</dbReference>
<dbReference type="STRING" id="3702.Q38914"/>
<dbReference type="PaxDb" id="3702-AT4G37750.1"/>
<dbReference type="ProteomicsDB" id="240880"/>
<dbReference type="EnsemblPlants" id="AT4G37750.1">
    <property type="protein sequence ID" value="AT4G37750.1"/>
    <property type="gene ID" value="AT4G37750"/>
</dbReference>
<dbReference type="GeneID" id="829931"/>
<dbReference type="Gramene" id="AT4G37750.1">
    <property type="protein sequence ID" value="AT4G37750.1"/>
    <property type="gene ID" value="AT4G37750"/>
</dbReference>
<dbReference type="KEGG" id="ath:AT4G37750"/>
<dbReference type="Araport" id="AT4G37750"/>
<dbReference type="TAIR" id="AT4G37750">
    <property type="gene designation" value="ANT"/>
</dbReference>
<dbReference type="eggNOG" id="ENOG502QQ82">
    <property type="taxonomic scope" value="Eukaryota"/>
</dbReference>
<dbReference type="HOGENOM" id="CLU_013549_4_0_1"/>
<dbReference type="InParanoid" id="Q38914"/>
<dbReference type="OMA" id="THEPNTT"/>
<dbReference type="PhylomeDB" id="Q38914"/>
<dbReference type="PRO" id="PR:Q38914"/>
<dbReference type="Proteomes" id="UP000006548">
    <property type="component" value="Chromosome 4"/>
</dbReference>
<dbReference type="ExpressionAtlas" id="Q38914">
    <property type="expression patterns" value="baseline and differential"/>
</dbReference>
<dbReference type="GO" id="GO:0005634">
    <property type="term" value="C:nucleus"/>
    <property type="evidence" value="ECO:0007669"/>
    <property type="project" value="UniProtKB-SubCell"/>
</dbReference>
<dbReference type="GO" id="GO:0003677">
    <property type="term" value="F:DNA binding"/>
    <property type="evidence" value="ECO:0000314"/>
    <property type="project" value="TAIR"/>
</dbReference>
<dbReference type="GO" id="GO:0003700">
    <property type="term" value="F:DNA-binding transcription factor activity"/>
    <property type="evidence" value="ECO:0000250"/>
    <property type="project" value="TAIR"/>
</dbReference>
<dbReference type="GO" id="GO:0000976">
    <property type="term" value="F:transcription cis-regulatory region binding"/>
    <property type="evidence" value="ECO:0000353"/>
    <property type="project" value="TAIR"/>
</dbReference>
<dbReference type="GO" id="GO:0030154">
    <property type="term" value="P:cell differentiation"/>
    <property type="evidence" value="ECO:0007669"/>
    <property type="project" value="UniProtKB-KW"/>
</dbReference>
<dbReference type="GO" id="GO:0051301">
    <property type="term" value="P:cell division"/>
    <property type="evidence" value="ECO:0000315"/>
    <property type="project" value="TAIR"/>
</dbReference>
<dbReference type="GO" id="GO:0009908">
    <property type="term" value="P:flower development"/>
    <property type="evidence" value="ECO:0007669"/>
    <property type="project" value="UniProtKB-KW"/>
</dbReference>
<dbReference type="GO" id="GO:0019760">
    <property type="term" value="P:glucosinolate metabolic process"/>
    <property type="evidence" value="ECO:0000315"/>
    <property type="project" value="TAIR"/>
</dbReference>
<dbReference type="GO" id="GO:0010492">
    <property type="term" value="P:maintenance of shoot apical meristem identity"/>
    <property type="evidence" value="ECO:0000316"/>
    <property type="project" value="TAIR"/>
</dbReference>
<dbReference type="GO" id="GO:0010601">
    <property type="term" value="P:positive regulation of auxin biosynthetic process"/>
    <property type="evidence" value="ECO:0000353"/>
    <property type="project" value="TAIR"/>
</dbReference>
<dbReference type="GO" id="GO:0042127">
    <property type="term" value="P:regulation of cell population proliferation"/>
    <property type="evidence" value="ECO:0000315"/>
    <property type="project" value="TAIR"/>
</dbReference>
<dbReference type="CDD" id="cd00018">
    <property type="entry name" value="AP2"/>
    <property type="match status" value="2"/>
</dbReference>
<dbReference type="FunFam" id="3.30.730.10:FF:000002">
    <property type="entry name" value="AP2-like ethylene-responsive transcription factor"/>
    <property type="match status" value="1"/>
</dbReference>
<dbReference type="FunFam" id="3.30.730.10:FF:000003">
    <property type="entry name" value="AP2-like ethylene-responsive transcription factor ANT"/>
    <property type="match status" value="1"/>
</dbReference>
<dbReference type="Gene3D" id="3.30.730.10">
    <property type="entry name" value="AP2/ERF domain"/>
    <property type="match status" value="2"/>
</dbReference>
<dbReference type="InterPro" id="IPR001471">
    <property type="entry name" value="AP2/ERF_dom"/>
</dbReference>
<dbReference type="InterPro" id="IPR036955">
    <property type="entry name" value="AP2/ERF_dom_sf"/>
</dbReference>
<dbReference type="InterPro" id="IPR016177">
    <property type="entry name" value="DNA-bd_dom_sf"/>
</dbReference>
<dbReference type="PANTHER" id="PTHR32467">
    <property type="entry name" value="AP2-LIKE ETHYLENE-RESPONSIVE TRANSCRIPTION FACTOR"/>
    <property type="match status" value="1"/>
</dbReference>
<dbReference type="PANTHER" id="PTHR32467:SF211">
    <property type="entry name" value="AP2-LIKE ETHYLENE-RESPONSIVE TRANSCRIPTION FACTOR ANT"/>
    <property type="match status" value="1"/>
</dbReference>
<dbReference type="Pfam" id="PF00847">
    <property type="entry name" value="AP2"/>
    <property type="match status" value="2"/>
</dbReference>
<dbReference type="PRINTS" id="PR00367">
    <property type="entry name" value="ETHRSPELEMNT"/>
</dbReference>
<dbReference type="SMART" id="SM00380">
    <property type="entry name" value="AP2"/>
    <property type="match status" value="2"/>
</dbReference>
<dbReference type="SUPFAM" id="SSF54171">
    <property type="entry name" value="DNA-binding domain"/>
    <property type="match status" value="2"/>
</dbReference>
<dbReference type="PROSITE" id="PS51032">
    <property type="entry name" value="AP2_ERF"/>
    <property type="match status" value="2"/>
</dbReference>
<accession>Q38914</accession>
<accession>Q42462</accession>
<proteinExistence type="evidence at protein level"/>
<organism>
    <name type="scientific">Arabidopsis thaliana</name>
    <name type="common">Mouse-ear cress</name>
    <dbReference type="NCBI Taxonomy" id="3702"/>
    <lineage>
        <taxon>Eukaryota</taxon>
        <taxon>Viridiplantae</taxon>
        <taxon>Streptophyta</taxon>
        <taxon>Embryophyta</taxon>
        <taxon>Tracheophyta</taxon>
        <taxon>Spermatophyta</taxon>
        <taxon>Magnoliopsida</taxon>
        <taxon>eudicotyledons</taxon>
        <taxon>Gunneridae</taxon>
        <taxon>Pentapetalae</taxon>
        <taxon>rosids</taxon>
        <taxon>malvids</taxon>
        <taxon>Brassicales</taxon>
        <taxon>Brassicaceae</taxon>
        <taxon>Camelineae</taxon>
        <taxon>Arabidopsis</taxon>
    </lineage>
</organism>